<keyword id="KW-0002">3D-structure</keyword>
<keyword id="KW-1003">Cell membrane</keyword>
<keyword id="KW-1015">Disulfide bond</keyword>
<keyword id="KW-0256">Endoplasmic reticulum</keyword>
<keyword id="KW-0297">G-protein coupled receptor</keyword>
<keyword id="KW-0325">Glycoprotein</keyword>
<keyword id="KW-0472">Membrane</keyword>
<keyword id="KW-0675">Receptor</keyword>
<keyword id="KW-1185">Reference proteome</keyword>
<keyword id="KW-0807">Transducer</keyword>
<keyword id="KW-0812">Transmembrane</keyword>
<keyword id="KW-1133">Transmembrane helix</keyword>
<feature type="chain" id="PRO_0000070143" description="Trace amine-associated receptor 1">
    <location>
        <begin position="1"/>
        <end position="332"/>
    </location>
</feature>
<feature type="topological domain" description="Extracellular" evidence="10 11">
    <location>
        <begin position="1"/>
        <end position="23"/>
    </location>
</feature>
<feature type="transmembrane region" description="Helical; Name=1" evidence="10 11">
    <location>
        <begin position="24"/>
        <end position="48"/>
    </location>
</feature>
<feature type="topological domain" description="Cytoplasmic" evidence="10 11">
    <location>
        <begin position="49"/>
        <end position="58"/>
    </location>
</feature>
<feature type="transmembrane region" description="Helical; Name=2" evidence="10 11">
    <location>
        <begin position="59"/>
        <end position="80"/>
    </location>
</feature>
<feature type="topological domain" description="Extracellular" evidence="10 11 14">
    <location>
        <begin position="81"/>
        <end position="95"/>
    </location>
</feature>
<feature type="transmembrane region" description="Helical; Name=3" evidence="10 11">
    <location>
        <begin position="96"/>
        <end position="118"/>
    </location>
</feature>
<feature type="topological domain" description="Cytoplasmic" evidence="10 11">
    <location>
        <begin position="119"/>
        <end position="138"/>
    </location>
</feature>
<feature type="transmembrane region" description="Helical; Name=4" evidence="10 11">
    <location>
        <begin position="139"/>
        <end position="160"/>
    </location>
</feature>
<feature type="topological domain" description="Extracellular" evidence="10 11">
    <location>
        <begin position="161"/>
        <end position="187"/>
    </location>
</feature>
<feature type="transmembrane region" description="Helical; Name=5" evidence="10 11">
    <location>
        <begin position="188"/>
        <end position="210"/>
    </location>
</feature>
<feature type="topological domain" description="Cytoplasmic" evidence="10 11">
    <location>
        <begin position="211"/>
        <end position="246"/>
    </location>
</feature>
<feature type="transmembrane region" description="Helical; Name=6" evidence="10 11">
    <location>
        <begin position="247"/>
        <end position="270"/>
    </location>
</feature>
<feature type="topological domain" description="Extracellular" evidence="10 11">
    <location>
        <begin position="271"/>
        <end position="283"/>
    </location>
</feature>
<feature type="transmembrane region" description="Helical; Name=7" evidence="10 11">
    <location>
        <begin position="284"/>
        <end position="304"/>
    </location>
</feature>
<feature type="topological domain" description="Cytoplasmic" evidence="10 11">
    <location>
        <begin position="305"/>
        <end position="332"/>
    </location>
</feature>
<feature type="region of interest" description="Extracellular Loop 2 (ECL2)" evidence="11">
    <location>
        <begin position="174"/>
        <end position="185"/>
    </location>
</feature>
<feature type="binding site" evidence="11 21">
    <location>
        <position position="102"/>
    </location>
    <ligand>
        <name>2-phenylethylamine</name>
        <dbReference type="ChEBI" id="CHEBI:225237"/>
    </ligand>
</feature>
<feature type="glycosylation site" description="N-linked (GlcNAc...) asparagine" evidence="2">
    <location>
        <position position="9"/>
    </location>
</feature>
<feature type="disulfide bond" evidence="3 10 11">
    <location>
        <begin position="95"/>
        <end position="181"/>
    </location>
</feature>
<feature type="mutagenesis site" description="Abolished activation of G(s) G alpha proteins in response to agonist-binding." evidence="10">
    <original>D</original>
    <variation>A</variation>
    <location>
        <position position="102"/>
    </location>
</feature>
<feature type="mutagenesis site" description="Reduced activation of G(q)/G(11) and G(s) G alpha proteins in response to agonist-binding." evidence="11">
    <original>I</original>
    <variation>A</variation>
    <location>
        <position position="103"/>
    </location>
</feature>
<feature type="mutagenesis site" description="Reduced activation of G(s) G alpha proteins in response to beta-phenylethylamine-binding. Does not affect activation of G(q) G alpha proteins in response to cyclohexylamine-binding." evidence="10 11">
    <original>S</original>
    <variation>A</variation>
    <location>
        <position position="106"/>
    </location>
</feature>
<feature type="mutagenesis site" description="Reduced activation of G(s) G alpha proteins in response to beta-phenylethylamine-binding. Does not affect activation of G(q) G alpha proteins in response to cyclohexylamine-binding." evidence="11">
    <original>Y</original>
    <variation>A</variation>
    <location>
        <position position="153"/>
    </location>
</feature>
<feature type="mutagenesis site" description="Reduced activation of G(s) G alpha proteins in response to beta-phenylethylamine-binding. Does not affect activation of G(q) G alpha proteins in response to cyclohexylamine-binding." evidence="10 11">
    <original>P</original>
    <variation>A</variation>
    <location>
        <position position="183"/>
    </location>
</feature>
<feature type="mutagenesis site" description="Reduced activation of G(q)/G(11) and G(s) G alpha proteins in response to agonist-binding." evidence="10 11">
    <original>F</original>
    <variation>A</variation>
    <location>
        <position position="185"/>
    </location>
</feature>
<feature type="mutagenesis site" description="Abolished activation of G alpha proteins in response to 3-iodothyronamine-binding." evidence="10">
    <original>W</original>
    <variation>A</variation>
    <location>
        <position position="261"/>
    </location>
</feature>
<feature type="mutagenesis site" description="Abolished activation of G alpha proteins in response to 3-iodothyronamine-binding." evidence="10">
    <original>F</original>
    <variation>A</variation>
    <location>
        <position position="264"/>
    </location>
</feature>
<feature type="mutagenesis site" description="Reduced activation of G(q)/G(11) and G(s) G alpha proteins in response to agonist-binding." evidence="10 11">
    <original>F</original>
    <variation>A</variation>
    <location>
        <position position="265"/>
    </location>
</feature>
<feature type="mutagenesis site" description="Reduced activation of Taar1 in response to agonist-binding." evidence="11">
    <original>Y</original>
    <variation>A</variation>
    <location>
        <position position="287"/>
    </location>
</feature>
<feature type="mutagenesis site" description="Abolished activation of G(s) G alpha proteins in response to beta-phenylethylamine-binding. Does not affect activation of G(q) G alpha proteins in response to cyclohexylamine-binding." evidence="10 11">
    <original>Y</original>
    <variation>A</variation>
    <location>
        <position position="291"/>
    </location>
</feature>
<feature type="helix" evidence="27">
    <location>
        <begin position="24"/>
        <end position="49"/>
    </location>
</feature>
<feature type="strand" evidence="28">
    <location>
        <begin position="51"/>
        <end position="53"/>
    </location>
</feature>
<feature type="helix" evidence="27">
    <location>
        <begin position="56"/>
        <end position="73"/>
    </location>
</feature>
<feature type="helix" evidence="27">
    <location>
        <begin position="75"/>
        <end position="84"/>
    </location>
</feature>
<feature type="strand" evidence="28">
    <location>
        <begin position="85"/>
        <end position="87"/>
    </location>
</feature>
<feature type="helix" evidence="27">
    <location>
        <begin position="92"/>
        <end position="125"/>
    </location>
</feature>
<feature type="helix" evidence="29">
    <location>
        <begin position="127"/>
        <end position="129"/>
    </location>
</feature>
<feature type="helix" evidence="27">
    <location>
        <begin position="130"/>
        <end position="133"/>
    </location>
</feature>
<feature type="helix" evidence="27">
    <location>
        <begin position="136"/>
        <end position="159"/>
    </location>
</feature>
<feature type="turn" evidence="27">
    <location>
        <begin position="160"/>
        <end position="166"/>
    </location>
</feature>
<feature type="helix" evidence="27">
    <location>
        <begin position="168"/>
        <end position="173"/>
    </location>
</feature>
<feature type="turn" evidence="27">
    <location>
        <begin position="174"/>
        <end position="177"/>
    </location>
</feature>
<feature type="helix" evidence="27">
    <location>
        <begin position="189"/>
        <end position="220"/>
    </location>
</feature>
<feature type="helix" evidence="27">
    <location>
        <begin position="249"/>
        <end position="274"/>
    </location>
</feature>
<feature type="helix" evidence="27">
    <location>
        <begin position="280"/>
        <end position="300"/>
    </location>
</feature>
<feature type="turn" evidence="27">
    <location>
        <begin position="301"/>
        <end position="303"/>
    </location>
</feature>
<feature type="helix" evidence="26">
    <location>
        <begin position="306"/>
        <end position="309"/>
    </location>
</feature>
<dbReference type="EMBL" id="AF380187">
    <property type="protein sequence ID" value="AAK71238.1"/>
    <property type="molecule type" value="Genomic_DNA"/>
</dbReference>
<dbReference type="EMBL" id="BC125368">
    <property type="protein sequence ID" value="AAI25369.1"/>
    <property type="molecule type" value="mRNA"/>
</dbReference>
<dbReference type="EMBL" id="BC125370">
    <property type="protein sequence ID" value="AAI25371.1"/>
    <property type="molecule type" value="mRNA"/>
</dbReference>
<dbReference type="CCDS" id="CCDS23735.1"/>
<dbReference type="RefSeq" id="NP_444435.1">
    <property type="nucleotide sequence ID" value="NM_053205.1"/>
</dbReference>
<dbReference type="PDB" id="8JLJ">
    <property type="method" value="EM"/>
    <property type="resolution" value="3.10 A"/>
    <property type="chains" value="R=1-332"/>
</dbReference>
<dbReference type="PDB" id="8JLK">
    <property type="method" value="EM"/>
    <property type="resolution" value="3.22 A"/>
    <property type="chains" value="R=1-332"/>
</dbReference>
<dbReference type="PDB" id="8WC3">
    <property type="method" value="EM"/>
    <property type="resolution" value="3.00 A"/>
    <property type="chains" value="R=1-332"/>
</dbReference>
<dbReference type="PDB" id="8WC4">
    <property type="method" value="EM"/>
    <property type="resolution" value="3.10 A"/>
    <property type="chains" value="R=1-332"/>
</dbReference>
<dbReference type="PDB" id="8WC5">
    <property type="method" value="EM"/>
    <property type="resolution" value="3.30 A"/>
    <property type="chains" value="R=1-332"/>
</dbReference>
<dbReference type="PDB" id="8WC6">
    <property type="method" value="EM"/>
    <property type="resolution" value="3.20 A"/>
    <property type="chains" value="R=1-332"/>
</dbReference>
<dbReference type="PDB" id="8WC7">
    <property type="method" value="EM"/>
    <property type="resolution" value="3.10 A"/>
    <property type="chains" value="R=1-332"/>
</dbReference>
<dbReference type="PDB" id="8WC9">
    <property type="method" value="EM"/>
    <property type="resolution" value="3.20 A"/>
    <property type="chains" value="R=1-332"/>
</dbReference>
<dbReference type="PDB" id="8WCB">
    <property type="method" value="EM"/>
    <property type="resolution" value="3.10 A"/>
    <property type="chains" value="R=1-332"/>
</dbReference>
<dbReference type="PDB" id="8WCC">
    <property type="method" value="EM"/>
    <property type="resolution" value="3.04 A"/>
    <property type="chains" value="R=1-332"/>
</dbReference>
<dbReference type="PDB" id="8ZSV">
    <property type="method" value="EM"/>
    <property type="resolution" value="2.96 A"/>
    <property type="chains" value="R=2-332"/>
</dbReference>
<dbReference type="PDBsum" id="8JLJ"/>
<dbReference type="PDBsum" id="8JLK"/>
<dbReference type="PDBsum" id="8WC3"/>
<dbReference type="PDBsum" id="8WC4"/>
<dbReference type="PDBsum" id="8WC5"/>
<dbReference type="PDBsum" id="8WC6"/>
<dbReference type="PDBsum" id="8WC7"/>
<dbReference type="PDBsum" id="8WC9"/>
<dbReference type="PDBsum" id="8WCB"/>
<dbReference type="PDBsum" id="8WCC"/>
<dbReference type="PDBsum" id="8ZSV"/>
<dbReference type="EMDB" id="EMD-36399"/>
<dbReference type="EMDB" id="EMD-36400"/>
<dbReference type="EMDB" id="EMD-37429"/>
<dbReference type="EMDB" id="EMD-37430"/>
<dbReference type="EMDB" id="EMD-37431"/>
<dbReference type="EMDB" id="EMD-37432"/>
<dbReference type="EMDB" id="EMD-37433"/>
<dbReference type="EMDB" id="EMD-37435"/>
<dbReference type="EMDB" id="EMD-37437"/>
<dbReference type="EMDB" id="EMD-37438"/>
<dbReference type="EMDB" id="EMD-60427"/>
<dbReference type="SMR" id="Q923Y8"/>
<dbReference type="FunCoup" id="Q923Y8">
    <property type="interactions" value="987"/>
</dbReference>
<dbReference type="STRING" id="10090.ENSMUSP00000049527"/>
<dbReference type="BindingDB" id="Q923Y8"/>
<dbReference type="ChEMBL" id="CHEMBL4908"/>
<dbReference type="DrugCentral" id="Q923Y8"/>
<dbReference type="GuidetoPHARMACOLOGY" id="364"/>
<dbReference type="GlyCosmos" id="Q923Y8">
    <property type="glycosylation" value="1 site, No reported glycans"/>
</dbReference>
<dbReference type="GlyGen" id="Q923Y8">
    <property type="glycosylation" value="1 site"/>
</dbReference>
<dbReference type="PhosphoSitePlus" id="Q923Y8"/>
<dbReference type="SwissPalm" id="Q923Y8"/>
<dbReference type="PaxDb" id="10090-ENSMUSP00000049527"/>
<dbReference type="Antibodypedia" id="19712">
    <property type="antibodies" value="180 antibodies from 27 providers"/>
</dbReference>
<dbReference type="DNASU" id="111174"/>
<dbReference type="Ensembl" id="ENSMUST00000051532.5">
    <property type="protein sequence ID" value="ENSMUSP00000049527.5"/>
    <property type="gene ID" value="ENSMUSG00000056379.4"/>
</dbReference>
<dbReference type="GeneID" id="111174"/>
<dbReference type="KEGG" id="mmu:111174"/>
<dbReference type="UCSC" id="uc007eqd.1">
    <property type="organism name" value="mouse"/>
</dbReference>
<dbReference type="AGR" id="MGI:2148258"/>
<dbReference type="CTD" id="134864"/>
<dbReference type="MGI" id="MGI:2148258">
    <property type="gene designation" value="Taar1"/>
</dbReference>
<dbReference type="VEuPathDB" id="HostDB:ENSMUSG00000056379"/>
<dbReference type="eggNOG" id="KOG3656">
    <property type="taxonomic scope" value="Eukaryota"/>
</dbReference>
<dbReference type="GeneTree" id="ENSGT00950000182934"/>
<dbReference type="HOGENOM" id="CLU_009579_11_0_1"/>
<dbReference type="InParanoid" id="Q923Y8"/>
<dbReference type="OMA" id="MQLCCES"/>
<dbReference type="OrthoDB" id="5959645at2759"/>
<dbReference type="PhylomeDB" id="Q923Y8"/>
<dbReference type="TreeFam" id="TF343107"/>
<dbReference type="Reactome" id="R-MMU-375280">
    <property type="pathway name" value="Amine ligand-binding receptors"/>
</dbReference>
<dbReference type="Reactome" id="R-MMU-418555">
    <property type="pathway name" value="G alpha (s) signalling events"/>
</dbReference>
<dbReference type="BioGRID-ORCS" id="111174">
    <property type="hits" value="3 hits in 77 CRISPR screens"/>
</dbReference>
<dbReference type="ChiTaRS" id="Slc7a5">
    <property type="organism name" value="mouse"/>
</dbReference>
<dbReference type="PRO" id="PR:Q923Y8"/>
<dbReference type="Proteomes" id="UP000000589">
    <property type="component" value="Chromosome 10"/>
</dbReference>
<dbReference type="RNAct" id="Q923Y8">
    <property type="molecule type" value="protein"/>
</dbReference>
<dbReference type="Bgee" id="ENSMUSG00000056379">
    <property type="expression patterns" value="Expressed in islet of Langerhans and 2 other cell types or tissues"/>
</dbReference>
<dbReference type="GO" id="GO:0005789">
    <property type="term" value="C:endoplasmic reticulum membrane"/>
    <property type="evidence" value="ECO:0007669"/>
    <property type="project" value="UniProtKB-SubCell"/>
</dbReference>
<dbReference type="GO" id="GO:0016020">
    <property type="term" value="C:membrane"/>
    <property type="evidence" value="ECO:0000305"/>
    <property type="project" value="MGI"/>
</dbReference>
<dbReference type="GO" id="GO:0005886">
    <property type="term" value="C:plasma membrane"/>
    <property type="evidence" value="ECO:0000314"/>
    <property type="project" value="UniProtKB"/>
</dbReference>
<dbReference type="GO" id="GO:0008227">
    <property type="term" value="F:G protein-coupled amine receptor activity"/>
    <property type="evidence" value="ECO:0000314"/>
    <property type="project" value="MGI"/>
</dbReference>
<dbReference type="GO" id="GO:0001594">
    <property type="term" value="F:trace-amine receptor activity"/>
    <property type="evidence" value="ECO:0000314"/>
    <property type="project" value="UniProtKB"/>
</dbReference>
<dbReference type="GO" id="GO:0007191">
    <property type="term" value="P:adenylate cyclase-activating dopamine receptor signaling pathway"/>
    <property type="evidence" value="ECO:0000266"/>
    <property type="project" value="MGI"/>
</dbReference>
<dbReference type="GO" id="GO:0007189">
    <property type="term" value="P:adenylate cyclase-activating G protein-coupled receptor signaling pathway"/>
    <property type="evidence" value="ECO:0000314"/>
    <property type="project" value="UniProtKB"/>
</dbReference>
<dbReference type="GO" id="GO:0007193">
    <property type="term" value="P:adenylate cyclase-inhibiting G protein-coupled receptor signaling pathway"/>
    <property type="evidence" value="ECO:0000314"/>
    <property type="project" value="UniProtKB"/>
</dbReference>
<dbReference type="GO" id="GO:0007186">
    <property type="term" value="P:G protein-coupled receptor signaling pathway"/>
    <property type="evidence" value="ECO:0000314"/>
    <property type="project" value="MGI"/>
</dbReference>
<dbReference type="GO" id="GO:0007200">
    <property type="term" value="P:phospholipase C-activating G protein-coupled receptor signaling pathway"/>
    <property type="evidence" value="ECO:0000314"/>
    <property type="project" value="UniProtKB"/>
</dbReference>
<dbReference type="CDD" id="cd15314">
    <property type="entry name" value="7tmA_TAAR1"/>
    <property type="match status" value="1"/>
</dbReference>
<dbReference type="FunFam" id="1.20.1070.10:FF:000030">
    <property type="entry name" value="trace amine-associated receptor 1"/>
    <property type="match status" value="1"/>
</dbReference>
<dbReference type="Gene3D" id="1.20.1070.10">
    <property type="entry name" value="Rhodopsin 7-helix transmembrane proteins"/>
    <property type="match status" value="1"/>
</dbReference>
<dbReference type="InterPro" id="IPR000276">
    <property type="entry name" value="GPCR_Rhodpsn"/>
</dbReference>
<dbReference type="InterPro" id="IPR017452">
    <property type="entry name" value="GPCR_Rhodpsn_7TM"/>
</dbReference>
<dbReference type="InterPro" id="IPR050569">
    <property type="entry name" value="TAAR"/>
</dbReference>
<dbReference type="InterPro" id="IPR009133">
    <property type="entry name" value="TAAR1"/>
</dbReference>
<dbReference type="InterPro" id="IPR009132">
    <property type="entry name" value="TAAR_fam"/>
</dbReference>
<dbReference type="PANTHER" id="PTHR24249">
    <property type="entry name" value="HISTAMINE RECEPTOR-RELATED G-PROTEIN COUPLED RECEPTOR"/>
    <property type="match status" value="1"/>
</dbReference>
<dbReference type="PANTHER" id="PTHR24249:SF415">
    <property type="entry name" value="TRACE AMINE-ASSOCIATED RECEPTOR 1"/>
    <property type="match status" value="1"/>
</dbReference>
<dbReference type="Pfam" id="PF00001">
    <property type="entry name" value="7tm_1"/>
    <property type="match status" value="1"/>
</dbReference>
<dbReference type="PRINTS" id="PR00237">
    <property type="entry name" value="GPCRRHODOPSN"/>
</dbReference>
<dbReference type="PRINTS" id="PR01831">
    <property type="entry name" value="TRACEAMINE1R"/>
</dbReference>
<dbReference type="PRINTS" id="PR01830">
    <property type="entry name" value="TRACEAMINER"/>
</dbReference>
<dbReference type="SMART" id="SM01381">
    <property type="entry name" value="7TM_GPCR_Srsx"/>
    <property type="match status" value="1"/>
</dbReference>
<dbReference type="SUPFAM" id="SSF81321">
    <property type="entry name" value="Family A G protein-coupled receptor-like"/>
    <property type="match status" value="1"/>
</dbReference>
<dbReference type="PROSITE" id="PS00237">
    <property type="entry name" value="G_PROTEIN_RECEP_F1_1"/>
    <property type="match status" value="1"/>
</dbReference>
<dbReference type="PROSITE" id="PS50262">
    <property type="entry name" value="G_PROTEIN_RECEP_F1_2"/>
    <property type="match status" value="1"/>
</dbReference>
<accession>Q923Y8</accession>
<accession>Q05A85</accession>
<sequence length="332" mass="37621">MHLCHAITNISHRNSDWSREVQASLYSLMSLIILATLVGNLIVIISISHFKQLHTPTNWLLHSMAIVDFLLGCLIMPCSMVRTVERCWYFGEILCKVHTSTDIMLSSASIFHLAFISIDRYCAVCDPLRYKAKINISTILVMILVSWSLPAVYAFGMIFLELNLKGVEELYRSQVSDLGGCSPFFSKVSGVLAFMTSFYIPGSVMLFVYYRIYFIAKGQARSINRTNVQVGLEGKSQAPQSKETKAAKTLGIMVGVFLVCWCPFFLCTVLDPFLGYVIPPSLNDALYWFGYLNSALNPMVYAFFYPWFRRALKMVLLGKIFQKDSSRSKLFL</sequence>
<proteinExistence type="evidence at protein level"/>
<name>TAAR1_MOUSE</name>
<protein>
    <recommendedName>
        <fullName evidence="13">Trace amine-associated receptor 1</fullName>
        <shortName>TaR-1</shortName>
        <shortName evidence="12">Trace amine receptor 1</shortName>
    </recommendedName>
</protein>
<gene>
    <name evidence="13 15" type="primary">Taar1</name>
    <name evidence="12" type="synonym">Ta1</name>
    <name type="synonym">Tar1</name>
    <name type="synonym">Trar1</name>
</gene>
<comment type="function">
    <text evidence="1 5 6 10 11">Intracellular G-protein coupled receptor for trace amines, which recognizes endogenous amine-containing metabolites such as beta-phenylethylamine (beta-PEA), 3-iodothyronamine (T1AM), isoamylamine (IAA), cadaverine (CAD), cyclohexylamine (CHA), p-tyramine (p-TYR), trimethylamine (TMA), octopamine and tryptamine (PubMed:15718104, PubMed:17212650, PubMed:37935376, PubMed:37963465). Also functions as a receptor for various drugs and psychoactive substances, such as amphetamine and methamphetamine (PubMed:17212650, PubMed:37935376). Unresponsive to classical biogenic amines, such as epinephrine and histamine and only partially activated by dopamine and serotonin (By similarity). Expressed in both the central and peripheral nervous system: TAAR1 activation regulates the activity of several neurotransmitter signaling pathways by (1) decreasing the basal firing rates of the neurons involved and by (2) lowering the sensitivity of receptors to neurotransmitters (PubMed:37935376, PubMed:37963465). Ligand binding causes a conformation change that triggers signaling via guanine nucleotide-binding proteins (G proteins) and modulates the activity of downstream effectors (PubMed:37935376, PubMed:37963465). TAAR1 is coupled with different G(i)/G(o)-, G(s)- or G(q)/G(11) classes of G alpha proteins depending on the ligand (PubMed:37935376, PubMed:37963465). CAD-binding is coupled to G(i)/G(o) G alpha proteins and mediates inhibition of adenylate cyclase activity (PubMed:37935376, PubMed:37963465). T1AM- or beta-PEA-binding is coupled to G(s) G alpha proteins and mediates activation of adenylate cyclase activity (PubMed:37935376, PubMed:37963465). CHA- or IAA-binding is coupled to G(q)/G(11) G alpha proteins and activates phospholipase C-beta, releasing diacylglycerol (DAG) and inositol 1,4,5-trisphosphate (IP3) second messengers (PubMed:37935376, PubMed:37963465). TMA-binding is coupled with all three G(i)/G(o)-, G(s)- or G(q)/G(11) G alpha protein subtypes (PubMed:37935376, PubMed:37963465).</text>
</comment>
<comment type="activity regulation">
    <text evidence="10">Activated by SEP-363856 small molecule: IHCH-7179 acts both as an agonist activator for HTR1A and TAAR1.</text>
</comment>
<comment type="subcellular location">
    <subcellularLocation>
        <location evidence="1">Endomembrane system</location>
    </subcellularLocation>
    <subcellularLocation>
        <location evidence="1">Endoplasmic reticulum membrane</location>
        <topology evidence="10 11">Multi-pass membrane protein</topology>
    </subcellularLocation>
    <subcellularLocation>
        <location evidence="9">Cell membrane</location>
        <topology evidence="10 11">Multi-pass membrane protein</topology>
    </subcellularLocation>
    <text evidence="1">Localizes mainly intracellularly. Partially colocalizes with the endoplasmic reticulum; also found at lower lever at the plasma membrane.</text>
</comment>
<comment type="tissue specificity">
    <text evidence="4">Widely distributed throughout the brain (PubMed:11459929). Strongly expressed in the mitral cell layer of the olfactory bulb, piriform cortex, the arcuate, motor, and mesencephalic trigeminal nuclei, lateral reticular and hypoglossal nuclei, cerebellar Purkinje cells, and ventral horn of the spinal cord (PubMed:11459929). Moderately expressed in the frontal, entorhinal, and agranular cortices, the ventral pallidum, thalamus, hippocampus, several hypothalamic nuclei, ambiguus, dorsal raphe, and gigantocellular reticular nuclei (PubMed:11459929). Weakly expressed in the septum, basal ganglia, amygdala, myelencephalon, and spinal cord dorsal horn (PubMed:11459929). Particularly interesting is the moderate expression in several monoaminergic cell groups, namely the dorsal raphe, the locus coeruleus, and the ventral tegmental area (PubMed:11459929).</text>
</comment>
<comment type="disruption phenotype">
    <text evidence="6 7 8">Enhanced sensitivity to the psychomotor-stimulating effect of amphetamine, characterized by greater locomotor stimulating effects and higher levels of striatal dopamine release (PubMed:17212650, PubMed:22079347). Mice display more addictive tendencies (PubMed:22079347, PubMed:26640076).</text>
</comment>
<comment type="similarity">
    <text evidence="3">Belongs to the G-protein coupled receptor 1 family.</text>
</comment>
<reference key="1">
    <citation type="journal article" date="2001" name="Proc. Natl. Acad. Sci. U.S.A.">
        <title>Trace amines: identification of a family of mammalian G protein-coupled receptors.</title>
        <authorList>
            <person name="Borowsky B."/>
            <person name="Adham N."/>
            <person name="Jones K.A."/>
            <person name="Raddatz R."/>
            <person name="Artymyshyn R."/>
            <person name="Ogozalek K.L."/>
            <person name="Durkin M.M."/>
            <person name="Lakhlani P.P."/>
            <person name="Bonini J.A."/>
            <person name="Pathirana S."/>
            <person name="Boyle N."/>
            <person name="Pu X."/>
            <person name="Kouranova E."/>
            <person name="Lichtblau H."/>
            <person name="Ochoa F.Y."/>
            <person name="Branchek T.A."/>
            <person name="Gerald C."/>
        </authorList>
    </citation>
    <scope>NUCLEOTIDE SEQUENCE [GENOMIC DNA]</scope>
    <scope>TISSUE SPECIFICITY</scope>
    <source>
        <strain>129/SvJ</strain>
    </source>
</reference>
<reference key="2">
    <citation type="journal article" date="2004" name="Genome Res.">
        <title>The status, quality, and expansion of the NIH full-length cDNA project: the Mammalian Gene Collection (MGC).</title>
        <authorList>
            <consortium name="The MGC Project Team"/>
        </authorList>
    </citation>
    <scope>NUCLEOTIDE SEQUENCE [LARGE SCALE MRNA]</scope>
    <source>
        <tissue>Brain</tissue>
    </source>
</reference>
<reference key="3">
    <citation type="journal article" date="2005" name="Genomics">
        <title>Trace amine-associated receptors form structurally and functionally distinct subfamilies of novel G protein-coupled receptors.</title>
        <authorList>
            <person name="Lindemann L."/>
            <person name="Ebeling M."/>
            <person name="Kratochwil N.A."/>
            <person name="Bunzow J.R."/>
            <person name="Grandy D.K."/>
            <person name="Hoener M.C."/>
        </authorList>
    </citation>
    <scope>FUNCTION</scope>
</reference>
<reference key="4">
    <citation type="journal article" date="2007" name="Genes Brain Behav.">
        <title>The Trace Amine 1 receptor knockout mouse: an animal model with relevance to schizophrenia.</title>
        <authorList>
            <person name="Wolinsky T.D."/>
            <person name="Swanson C.J."/>
            <person name="Smith K.E."/>
            <person name="Zhong H."/>
            <person name="Borowsky B."/>
            <person name="Seeman P."/>
            <person name="Branchek T."/>
            <person name="Gerald C.P."/>
        </authorList>
    </citation>
    <scope>FUNCTION</scope>
    <scope>DISRUPTION PHENOTYPE</scope>
</reference>
<reference key="5">
    <citation type="journal article" date="2012" name="Pharmacol. Biochem. Behav.">
        <title>Augmentation of methamphetamine-induced behaviors in transgenic mice lacking the trace amine-associated receptor 1.</title>
        <authorList>
            <person name="Achat-Mendes C."/>
            <person name="Lynch L.J."/>
            <person name="Sullivan K.A."/>
            <person name="Vallender E.J."/>
            <person name="Miller G.M."/>
        </authorList>
    </citation>
    <scope>DISRUPTION PHENOTYPE</scope>
</reference>
<reference key="6">
    <citation type="journal article" date="2016" name="Pharmacol. Res.">
        <title>Increased context-dependent conditioning to amphetamine in mice lacking TAAR1.</title>
        <authorList>
            <person name="Sukhanov I."/>
            <person name="Caffino L."/>
            <person name="Efimova E.V."/>
            <person name="Espinoza S."/>
            <person name="Sotnikova T.D."/>
            <person name="Cervo L."/>
            <person name="Fumagalli F."/>
            <person name="Gainetdinov R.R."/>
        </authorList>
    </citation>
    <scope>DISRUPTION PHENOTYPE</scope>
</reference>
<reference key="7">
    <citation type="journal article" date="2023" name="Nature">
        <title>Structural basis of amine odorant perception by a mammal olfactory receptor.</title>
        <authorList>
            <person name="Guo L."/>
            <person name="Cheng J."/>
            <person name="Lian S."/>
            <person name="Liu Q."/>
            <person name="Lu Y."/>
            <person name="Zheng Y."/>
            <person name="Zhu K."/>
            <person name="Zhang M."/>
            <person name="Kong Y."/>
            <person name="Zhang C."/>
            <person name="Rong N."/>
            <person name="Zhuang Y."/>
            <person name="Fang G."/>
            <person name="Jiang J."/>
            <person name="Zhang T."/>
            <person name="Han X."/>
            <person name="Liu Z."/>
            <person name="Xia M."/>
            <person name="Liu S."/>
            <person name="Zhang L."/>
            <person name="Liberles S.D."/>
            <person name="Yu X."/>
            <person name="Xu Y."/>
            <person name="Yang F."/>
            <person name="Li Q."/>
            <person name="Sun J.P."/>
        </authorList>
    </citation>
    <scope>SUBCELLULAR LOCATION</scope>
</reference>
<reference evidence="18 19 20 21 22 23 24 25" key="8">
    <citation type="journal article" date="2023" name="Cell">
        <title>Structural and signaling mechanisms of TAAR1 enabled preferential agonist design.</title>
        <authorList>
            <person name="Shang P."/>
            <person name="Rong N."/>
            <person name="Jiang J.J."/>
            <person name="Cheng J."/>
            <person name="Zhang M.H."/>
            <person name="Kang D."/>
            <person name="Qi L."/>
            <person name="Guo L."/>
            <person name="Yang G.M."/>
            <person name="Liu Q."/>
            <person name="Zhou Z."/>
            <person name="Li X.B."/>
            <person name="Zhu K.K."/>
            <person name="Meng Q.B."/>
            <person name="Han X."/>
            <person name="Yan W."/>
            <person name="Kong Y."/>
            <person name="Yang L."/>
            <person name="Wang X."/>
            <person name="Lei D."/>
            <person name="Feng X."/>
            <person name="Liu X."/>
            <person name="Yu X."/>
            <person name="Wang Y."/>
            <person name="Li Q."/>
            <person name="Shao Z.H."/>
            <person name="Yang F."/>
            <person name="Sun J.P."/>
        </authorList>
    </citation>
    <scope>STRUCTURE BY ELECTRON MICROSCOPY (3.1 ANGSTROMS) IN COMPLEX WITH TRIMETHYLAMINE; BETA-PHENYLETHYLAMINE; CYCLOHEXYLAMINE; GNB1 AND GNG2</scope>
    <scope>FUNCTION</scope>
    <scope>DISULFIDE BOND</scope>
    <scope>MUTAGENESIS OF ILE-103; SER-106; TYR-153; PRO-183; PHE-185; PHE-265; TYR-287 AND TYR-291</scope>
</reference>
<reference evidence="16 17" key="9">
    <citation type="journal article" date="2023" name="Nature">
        <title>Ligand recognition and G-protein coupling of trace amine receptor TAAR1.</title>
        <authorList>
            <person name="Xu Z."/>
            <person name="Guo L."/>
            <person name="Yu J."/>
            <person name="Shen S."/>
            <person name="Wu C."/>
            <person name="Zhang W."/>
            <person name="Zhao C."/>
            <person name="Deng Y."/>
            <person name="Tian X."/>
            <person name="Feng Y."/>
            <person name="Hou H."/>
            <person name="Su L."/>
            <person name="Wang H."/>
            <person name="Guo S."/>
            <person name="Wang H."/>
            <person name="Wang K."/>
            <person name="Chen P."/>
            <person name="Zhao J."/>
            <person name="Zhang X."/>
            <person name="Yong X."/>
            <person name="Cheng L."/>
            <person name="Liu L."/>
            <person name="Yang S."/>
            <person name="Yang F."/>
            <person name="Wang X."/>
            <person name="Yu X."/>
            <person name="Xu Y."/>
            <person name="Sun J.P."/>
            <person name="Yan W."/>
            <person name="Shao Z."/>
        </authorList>
    </citation>
    <scope>STRUCTURE BY ELECTRON MICROSCOPY (3.1 ANGSTROMS) IN COMPLEX WITH BETA-PHENYLETHYLAMINE; GNAS; GNB1 AND GNG2</scope>
    <scope>FUNCTION</scope>
    <scope>ACTIVITY REGULATION</scope>
    <scope>DISULFIDE BOND</scope>
    <scope>MUTAGENESIS OF ASP-102; SER-106; PRO-183; PHE-185; TRP-261; PHE-264; PHE-265 AND TYR-291</scope>
</reference>
<organism>
    <name type="scientific">Mus musculus</name>
    <name type="common">Mouse</name>
    <dbReference type="NCBI Taxonomy" id="10090"/>
    <lineage>
        <taxon>Eukaryota</taxon>
        <taxon>Metazoa</taxon>
        <taxon>Chordata</taxon>
        <taxon>Craniata</taxon>
        <taxon>Vertebrata</taxon>
        <taxon>Euteleostomi</taxon>
        <taxon>Mammalia</taxon>
        <taxon>Eutheria</taxon>
        <taxon>Euarchontoglires</taxon>
        <taxon>Glires</taxon>
        <taxon>Rodentia</taxon>
        <taxon>Myomorpha</taxon>
        <taxon>Muroidea</taxon>
        <taxon>Muridae</taxon>
        <taxon>Murinae</taxon>
        <taxon>Mus</taxon>
        <taxon>Mus</taxon>
    </lineage>
</organism>
<evidence type="ECO:0000250" key="1">
    <source>
        <dbReference type="UniProtKB" id="Q96RJ0"/>
    </source>
</evidence>
<evidence type="ECO:0000255" key="2"/>
<evidence type="ECO:0000255" key="3">
    <source>
        <dbReference type="PROSITE-ProRule" id="PRU00521"/>
    </source>
</evidence>
<evidence type="ECO:0000269" key="4">
    <source>
    </source>
</evidence>
<evidence type="ECO:0000269" key="5">
    <source>
    </source>
</evidence>
<evidence type="ECO:0000269" key="6">
    <source>
    </source>
</evidence>
<evidence type="ECO:0000269" key="7">
    <source>
    </source>
</evidence>
<evidence type="ECO:0000269" key="8">
    <source>
    </source>
</evidence>
<evidence type="ECO:0000269" key="9">
    <source>
    </source>
</evidence>
<evidence type="ECO:0000269" key="10">
    <source>
    </source>
</evidence>
<evidence type="ECO:0000269" key="11">
    <source>
    </source>
</evidence>
<evidence type="ECO:0000303" key="12">
    <source>
    </source>
</evidence>
<evidence type="ECO:0000303" key="13">
    <source>
    </source>
</evidence>
<evidence type="ECO:0000305" key="14"/>
<evidence type="ECO:0000312" key="15">
    <source>
        <dbReference type="MGI" id="MGI:2148258"/>
    </source>
</evidence>
<evidence type="ECO:0007744" key="16">
    <source>
        <dbReference type="PDB" id="8JLJ"/>
    </source>
</evidence>
<evidence type="ECO:0007744" key="17">
    <source>
        <dbReference type="PDB" id="8JLK"/>
    </source>
</evidence>
<evidence type="ECO:0007744" key="18">
    <source>
        <dbReference type="PDB" id="8WC3"/>
    </source>
</evidence>
<evidence type="ECO:0007744" key="19">
    <source>
        <dbReference type="PDB" id="8WC4"/>
    </source>
</evidence>
<evidence type="ECO:0007744" key="20">
    <source>
        <dbReference type="PDB" id="8WC5"/>
    </source>
</evidence>
<evidence type="ECO:0007744" key="21">
    <source>
        <dbReference type="PDB" id="8WC6"/>
    </source>
</evidence>
<evidence type="ECO:0007744" key="22">
    <source>
        <dbReference type="PDB" id="8WC7"/>
    </source>
</evidence>
<evidence type="ECO:0007744" key="23">
    <source>
        <dbReference type="PDB" id="8WC9"/>
    </source>
</evidence>
<evidence type="ECO:0007744" key="24">
    <source>
        <dbReference type="PDB" id="8WCB"/>
    </source>
</evidence>
<evidence type="ECO:0007744" key="25">
    <source>
        <dbReference type="PDB" id="8WCC"/>
    </source>
</evidence>
<evidence type="ECO:0007829" key="26">
    <source>
        <dbReference type="PDB" id="8JLJ"/>
    </source>
</evidence>
<evidence type="ECO:0007829" key="27">
    <source>
        <dbReference type="PDB" id="8WC3"/>
    </source>
</evidence>
<evidence type="ECO:0007829" key="28">
    <source>
        <dbReference type="PDB" id="8WC4"/>
    </source>
</evidence>
<evidence type="ECO:0007829" key="29">
    <source>
        <dbReference type="PDB" id="8WC7"/>
    </source>
</evidence>